<gene>
    <name type="primary">GIP</name>
</gene>
<feature type="signal peptide" evidence="1">
    <location>
        <begin position="1"/>
        <end position="21"/>
    </location>
</feature>
<feature type="propeptide" id="PRO_0000011214">
    <location>
        <begin position="22"/>
        <end position="50"/>
    </location>
</feature>
<feature type="peptide" id="PRO_0000011215" description="Gastric inhibitory polypeptide">
    <location>
        <begin position="52"/>
        <end position="93"/>
    </location>
</feature>
<feature type="propeptide" id="PRO_0000011216">
    <location>
        <begin position="95"/>
        <end position="153"/>
    </location>
</feature>
<feature type="region of interest" description="Disordered" evidence="2">
    <location>
        <begin position="102"/>
        <end position="125"/>
    </location>
</feature>
<feature type="sequence variant" id="VAR_021897" description="In dbSNP:rs2291725." evidence="3">
    <original>S</original>
    <variation>G</variation>
    <location>
        <position position="103"/>
    </location>
</feature>
<feature type="sequence variant" id="VAR_033973" description="In dbSNP:rs35703924.">
    <original>N</original>
    <variation>S</variation>
    <location>
        <position position="146"/>
    </location>
</feature>
<feature type="helix" evidence="6">
    <location>
        <begin position="57"/>
        <end position="79"/>
    </location>
</feature>
<feature type="turn" evidence="6">
    <location>
        <begin position="80"/>
        <end position="82"/>
    </location>
</feature>
<feature type="strand" evidence="5">
    <location>
        <begin position="86"/>
        <end position="88"/>
    </location>
</feature>
<name>GIP_HUMAN</name>
<evidence type="ECO:0000255" key="1"/>
<evidence type="ECO:0000256" key="2">
    <source>
        <dbReference type="SAM" id="MobiDB-lite"/>
    </source>
</evidence>
<evidence type="ECO:0000269" key="3">
    <source>
    </source>
</evidence>
<evidence type="ECO:0000305" key="4"/>
<evidence type="ECO:0007829" key="5">
    <source>
        <dbReference type="PDB" id="2L70"/>
    </source>
</evidence>
<evidence type="ECO:0007829" key="6">
    <source>
        <dbReference type="PDB" id="2QKH"/>
    </source>
</evidence>
<accession>P09681</accession>
<accession>Q4VB42</accession>
<accession>Q6NTD3</accession>
<comment type="function">
    <text>Potent stimulator of insulin secretion and relatively poor inhibitor of gastric acid secretion.</text>
</comment>
<comment type="interaction">
    <interactant intactId="EBI-8588553">
        <id>P09681</id>
    </interactant>
    <interactant intactId="EBI-10173507">
        <id>Q6UY14-3</id>
        <label>ADAMTSL4</label>
    </interactant>
    <organismsDiffer>false</organismsDiffer>
    <experiments>3</experiments>
</comment>
<comment type="interaction">
    <interactant intactId="EBI-8588553">
        <id>P09681</id>
    </interactant>
    <interactant intactId="EBI-15653881">
        <id>P48546</id>
        <label>GIPR</label>
    </interactant>
    <organismsDiffer>false</organismsDiffer>
    <experiments>3</experiments>
</comment>
<comment type="interaction">
    <interactant intactId="EBI-8588553">
        <id>P09681</id>
    </interactant>
    <interactant intactId="EBI-945833">
        <id>Q7Z3S9</id>
        <label>NOTCH2NLA</label>
    </interactant>
    <organismsDiffer>false</organismsDiffer>
    <experiments>3</experiments>
</comment>
<comment type="interaction">
    <interactant intactId="EBI-8588553">
        <id>P09681</id>
    </interactant>
    <interactant intactId="EBI-347996">
        <id>O43765</id>
        <label>SGTA</label>
    </interactant>
    <organismsDiffer>false</organismsDiffer>
    <experiments>6</experiments>
</comment>
<comment type="interaction">
    <interactant intactId="EBI-8588553">
        <id>P09681</id>
    </interactant>
    <interactant intactId="EBI-744081">
        <id>Q96EQ0</id>
        <label>SGTB</label>
    </interactant>
    <organismsDiffer>false</organismsDiffer>
    <experiments>3</experiments>
</comment>
<comment type="subcellular location">
    <subcellularLocation>
        <location>Secreted</location>
    </subcellularLocation>
</comment>
<comment type="similarity">
    <text evidence="4">Belongs to the glucagon family.</text>
</comment>
<organism>
    <name type="scientific">Homo sapiens</name>
    <name type="common">Human</name>
    <dbReference type="NCBI Taxonomy" id="9606"/>
    <lineage>
        <taxon>Eukaryota</taxon>
        <taxon>Metazoa</taxon>
        <taxon>Chordata</taxon>
        <taxon>Craniata</taxon>
        <taxon>Vertebrata</taxon>
        <taxon>Euteleostomi</taxon>
        <taxon>Mammalia</taxon>
        <taxon>Eutheria</taxon>
        <taxon>Euarchontoglires</taxon>
        <taxon>Primates</taxon>
        <taxon>Haplorrhini</taxon>
        <taxon>Catarrhini</taxon>
        <taxon>Hominidae</taxon>
        <taxon>Homo</taxon>
    </lineage>
</organism>
<dbReference type="EMBL" id="M18185">
    <property type="protein sequence ID" value="AAA88043.1"/>
    <property type="molecule type" value="mRNA"/>
</dbReference>
<dbReference type="EMBL" id="M31679">
    <property type="protein sequence ID" value="AAA53192.1"/>
    <property type="molecule type" value="Genomic_DNA"/>
</dbReference>
<dbReference type="EMBL" id="M31675">
    <property type="protein sequence ID" value="AAA53192.1"/>
    <property type="status" value="JOINED"/>
    <property type="molecule type" value="Genomic_DNA"/>
</dbReference>
<dbReference type="EMBL" id="M31676">
    <property type="protein sequence ID" value="AAA53192.1"/>
    <property type="status" value="JOINED"/>
    <property type="molecule type" value="Genomic_DNA"/>
</dbReference>
<dbReference type="EMBL" id="M31677">
    <property type="protein sequence ID" value="AAA53192.1"/>
    <property type="status" value="JOINED"/>
    <property type="molecule type" value="Genomic_DNA"/>
</dbReference>
<dbReference type="EMBL" id="M31678">
    <property type="protein sequence ID" value="AAA53192.1"/>
    <property type="status" value="JOINED"/>
    <property type="molecule type" value="Genomic_DNA"/>
</dbReference>
<dbReference type="EMBL" id="BC069100">
    <property type="protein sequence ID" value="AAH69100.1"/>
    <property type="molecule type" value="mRNA"/>
</dbReference>
<dbReference type="EMBL" id="BC069663">
    <property type="protein sequence ID" value="AAH69663.1"/>
    <property type="molecule type" value="mRNA"/>
</dbReference>
<dbReference type="EMBL" id="BC069686">
    <property type="protein sequence ID" value="AAH69686.1"/>
    <property type="molecule type" value="mRNA"/>
</dbReference>
<dbReference type="EMBL" id="BC069746">
    <property type="protein sequence ID" value="AAH69746.1"/>
    <property type="molecule type" value="mRNA"/>
</dbReference>
<dbReference type="EMBL" id="BC096146">
    <property type="protein sequence ID" value="AAH96146.1"/>
    <property type="molecule type" value="mRNA"/>
</dbReference>
<dbReference type="EMBL" id="BC096147">
    <property type="protein sequence ID" value="AAH96147.1"/>
    <property type="molecule type" value="mRNA"/>
</dbReference>
<dbReference type="EMBL" id="BC096148">
    <property type="protein sequence ID" value="AAH96148.1"/>
    <property type="molecule type" value="mRNA"/>
</dbReference>
<dbReference type="EMBL" id="BC096149">
    <property type="protein sequence ID" value="AAH96149.1"/>
    <property type="molecule type" value="mRNA"/>
</dbReference>
<dbReference type="CCDS" id="CCDS11542.1"/>
<dbReference type="PIR" id="A28406">
    <property type="entry name" value="A28406"/>
</dbReference>
<dbReference type="RefSeq" id="NP_004114.1">
    <property type="nucleotide sequence ID" value="NM_004123.3"/>
</dbReference>
<dbReference type="PDB" id="1T5Q">
    <property type="method" value="NMR"/>
    <property type="chains" value="A=52-81"/>
</dbReference>
<dbReference type="PDB" id="2B4N">
    <property type="method" value="NMR"/>
    <property type="chains" value="A=52-93"/>
</dbReference>
<dbReference type="PDB" id="2L70">
    <property type="method" value="NMR"/>
    <property type="chains" value="A=52-93"/>
</dbReference>
<dbReference type="PDB" id="2L71">
    <property type="method" value="NMR"/>
    <property type="chains" value="A=52-93"/>
</dbReference>
<dbReference type="PDB" id="2OBU">
    <property type="method" value="NMR"/>
    <property type="chains" value="A=52-93"/>
</dbReference>
<dbReference type="PDB" id="2QKH">
    <property type="method" value="X-ray"/>
    <property type="resolution" value="1.90 A"/>
    <property type="chains" value="B=52-93"/>
</dbReference>
<dbReference type="PDB" id="7DTY">
    <property type="method" value="EM"/>
    <property type="resolution" value="2.98 A"/>
    <property type="chains" value="P=52-93"/>
</dbReference>
<dbReference type="PDB" id="7RA3">
    <property type="method" value="EM"/>
    <property type="resolution" value="3.24 A"/>
    <property type="chains" value="P=52-93"/>
</dbReference>
<dbReference type="PDBsum" id="1T5Q"/>
<dbReference type="PDBsum" id="2B4N"/>
<dbReference type="PDBsum" id="2L70"/>
<dbReference type="PDBsum" id="2L71"/>
<dbReference type="PDBsum" id="2OBU"/>
<dbReference type="PDBsum" id="2QKH"/>
<dbReference type="PDBsum" id="7DTY"/>
<dbReference type="PDBsum" id="7RA3"/>
<dbReference type="BMRB" id="P09681"/>
<dbReference type="EMDB" id="EMD-24334"/>
<dbReference type="EMDB" id="EMD-30860"/>
<dbReference type="SMR" id="P09681"/>
<dbReference type="BioGRID" id="108962">
    <property type="interactions" value="46"/>
</dbReference>
<dbReference type="DIP" id="DIP-46469N"/>
<dbReference type="FunCoup" id="P09681">
    <property type="interactions" value="571"/>
</dbReference>
<dbReference type="IntAct" id="P09681">
    <property type="interactions" value="43"/>
</dbReference>
<dbReference type="MINT" id="P09681"/>
<dbReference type="STRING" id="9606.ENSP00000350005"/>
<dbReference type="BindingDB" id="P09681"/>
<dbReference type="iPTMnet" id="P09681"/>
<dbReference type="PhosphoSitePlus" id="P09681"/>
<dbReference type="BioMuta" id="GIP"/>
<dbReference type="DMDM" id="121194"/>
<dbReference type="jPOST" id="P09681"/>
<dbReference type="MassIVE" id="P09681"/>
<dbReference type="PaxDb" id="9606-ENSP00000350005"/>
<dbReference type="PeptideAtlas" id="P09681"/>
<dbReference type="ProteomicsDB" id="52264"/>
<dbReference type="Antibodypedia" id="3388">
    <property type="antibodies" value="358 antibodies from 29 providers"/>
</dbReference>
<dbReference type="DNASU" id="2695"/>
<dbReference type="Ensembl" id="ENST00000357424.2">
    <property type="protein sequence ID" value="ENSP00000350005.2"/>
    <property type="gene ID" value="ENSG00000159224.4"/>
</dbReference>
<dbReference type="GeneID" id="2695"/>
<dbReference type="KEGG" id="hsa:2695"/>
<dbReference type="MANE-Select" id="ENST00000357424.2">
    <property type="protein sequence ID" value="ENSP00000350005.2"/>
    <property type="RefSeq nucleotide sequence ID" value="NM_004123.3"/>
    <property type="RefSeq protein sequence ID" value="NP_004114.1"/>
</dbReference>
<dbReference type="UCSC" id="uc002iol.2">
    <property type="organism name" value="human"/>
</dbReference>
<dbReference type="AGR" id="HGNC:4270"/>
<dbReference type="CTD" id="2695"/>
<dbReference type="DisGeNET" id="2695"/>
<dbReference type="GeneCards" id="GIP"/>
<dbReference type="HGNC" id="HGNC:4270">
    <property type="gene designation" value="GIP"/>
</dbReference>
<dbReference type="HPA" id="ENSG00000159224">
    <property type="expression patterns" value="Tissue enriched (intestine)"/>
</dbReference>
<dbReference type="MIM" id="137240">
    <property type="type" value="gene"/>
</dbReference>
<dbReference type="neXtProt" id="NX_P09681"/>
<dbReference type="OpenTargets" id="ENSG00000159224"/>
<dbReference type="PharmGKB" id="PA28681"/>
<dbReference type="VEuPathDB" id="HostDB:ENSG00000159224"/>
<dbReference type="eggNOG" id="ENOG502S7ZH">
    <property type="taxonomic scope" value="Eukaryota"/>
</dbReference>
<dbReference type="GeneTree" id="ENSGT00390000005121"/>
<dbReference type="HOGENOM" id="CLU_146415_0_0_1"/>
<dbReference type="InParanoid" id="P09681"/>
<dbReference type="OMA" id="GHSRFHT"/>
<dbReference type="OrthoDB" id="8874823at2759"/>
<dbReference type="PAN-GO" id="P09681">
    <property type="GO annotations" value="3 GO annotations based on evolutionary models"/>
</dbReference>
<dbReference type="PhylomeDB" id="P09681"/>
<dbReference type="TreeFam" id="TF332333"/>
<dbReference type="PathwayCommons" id="P09681"/>
<dbReference type="Reactome" id="R-HSA-400511">
    <property type="pathway name" value="Synthesis, secretion, and inactivation of Glucose-dependent Insulinotropic Polypeptide (GIP)"/>
</dbReference>
<dbReference type="Reactome" id="R-HSA-418555">
    <property type="pathway name" value="G alpha (s) signalling events"/>
</dbReference>
<dbReference type="Reactome" id="R-HSA-420092">
    <property type="pathway name" value="Glucagon-type ligand receptors"/>
</dbReference>
<dbReference type="SignaLink" id="P09681"/>
<dbReference type="BioGRID-ORCS" id="2695">
    <property type="hits" value="9 hits in 1141 CRISPR screens"/>
</dbReference>
<dbReference type="ChiTaRS" id="GIP">
    <property type="organism name" value="human"/>
</dbReference>
<dbReference type="EvolutionaryTrace" id="P09681"/>
<dbReference type="GenomeRNAi" id="2695"/>
<dbReference type="Pharos" id="P09681">
    <property type="development level" value="Tbio"/>
</dbReference>
<dbReference type="PRO" id="PR:P09681"/>
<dbReference type="Proteomes" id="UP000005640">
    <property type="component" value="Chromosome 17"/>
</dbReference>
<dbReference type="RNAct" id="P09681">
    <property type="molecule type" value="protein"/>
</dbReference>
<dbReference type="Bgee" id="ENSG00000159224">
    <property type="expression patterns" value="Expressed in jejunal mucosa and 34 other cell types or tissues"/>
</dbReference>
<dbReference type="GO" id="GO:0005788">
    <property type="term" value="C:endoplasmic reticulum lumen"/>
    <property type="evidence" value="ECO:0000304"/>
    <property type="project" value="Reactome"/>
</dbReference>
<dbReference type="GO" id="GO:0005576">
    <property type="term" value="C:extracellular region"/>
    <property type="evidence" value="ECO:0000304"/>
    <property type="project" value="Reactome"/>
</dbReference>
<dbReference type="GO" id="GO:0005615">
    <property type="term" value="C:extracellular space"/>
    <property type="evidence" value="ECO:0000318"/>
    <property type="project" value="GO_Central"/>
</dbReference>
<dbReference type="GO" id="GO:0034774">
    <property type="term" value="C:secretory granule lumen"/>
    <property type="evidence" value="ECO:0000304"/>
    <property type="project" value="Reactome"/>
</dbReference>
<dbReference type="GO" id="GO:0031767">
    <property type="term" value="F:gastric inhibitory polypeptide receptor binding"/>
    <property type="evidence" value="ECO:0000353"/>
    <property type="project" value="BHF-UCL"/>
</dbReference>
<dbReference type="GO" id="GO:0031769">
    <property type="term" value="F:glucagon receptor binding"/>
    <property type="evidence" value="ECO:0000318"/>
    <property type="project" value="GO_Central"/>
</dbReference>
<dbReference type="GO" id="GO:0005179">
    <property type="term" value="F:hormone activity"/>
    <property type="evidence" value="ECO:0000304"/>
    <property type="project" value="ProtInc"/>
</dbReference>
<dbReference type="GO" id="GO:0007189">
    <property type="term" value="P:adenylate cyclase-activating G protein-coupled receptor signaling pathway"/>
    <property type="evidence" value="ECO:0000314"/>
    <property type="project" value="BHF-UCL"/>
</dbReference>
<dbReference type="GO" id="GO:0008344">
    <property type="term" value="P:adult locomotory behavior"/>
    <property type="evidence" value="ECO:0007669"/>
    <property type="project" value="Ensembl"/>
</dbReference>
<dbReference type="GO" id="GO:0031018">
    <property type="term" value="P:endocrine pancreas development"/>
    <property type="evidence" value="ECO:0007669"/>
    <property type="project" value="Ensembl"/>
</dbReference>
<dbReference type="GO" id="GO:0035640">
    <property type="term" value="P:exploration behavior"/>
    <property type="evidence" value="ECO:0007669"/>
    <property type="project" value="Ensembl"/>
</dbReference>
<dbReference type="GO" id="GO:0038192">
    <property type="term" value="P:gastric inhibitory peptide signaling pathway"/>
    <property type="evidence" value="ECO:0000314"/>
    <property type="project" value="BHF-UCL"/>
</dbReference>
<dbReference type="GO" id="GO:0007613">
    <property type="term" value="P:memory"/>
    <property type="evidence" value="ECO:0007669"/>
    <property type="project" value="Ensembl"/>
</dbReference>
<dbReference type="GO" id="GO:0032024">
    <property type="term" value="P:positive regulation of insulin secretion"/>
    <property type="evidence" value="ECO:0007669"/>
    <property type="project" value="Ensembl"/>
</dbReference>
<dbReference type="GO" id="GO:0042304">
    <property type="term" value="P:regulation of fatty acid biosynthetic process"/>
    <property type="evidence" value="ECO:0007669"/>
    <property type="project" value="InterPro"/>
</dbReference>
<dbReference type="GO" id="GO:0050796">
    <property type="term" value="P:regulation of insulin secretion"/>
    <property type="evidence" value="ECO:0000304"/>
    <property type="project" value="ParkinsonsUK-UCL"/>
</dbReference>
<dbReference type="GO" id="GO:0009749">
    <property type="term" value="P:response to glucose"/>
    <property type="evidence" value="ECO:0007669"/>
    <property type="project" value="InterPro"/>
</dbReference>
<dbReference type="GO" id="GO:0042594">
    <property type="term" value="P:response to starvation"/>
    <property type="evidence" value="ECO:0000318"/>
    <property type="project" value="GO_Central"/>
</dbReference>
<dbReference type="GO" id="GO:0019233">
    <property type="term" value="P:sensory perception of pain"/>
    <property type="evidence" value="ECO:0007669"/>
    <property type="project" value="Ensembl"/>
</dbReference>
<dbReference type="GO" id="GO:0007165">
    <property type="term" value="P:signal transduction"/>
    <property type="evidence" value="ECO:0000304"/>
    <property type="project" value="ProtInc"/>
</dbReference>
<dbReference type="Gene3D" id="6.10.250.590">
    <property type="match status" value="1"/>
</dbReference>
<dbReference type="InterPro" id="IPR039078">
    <property type="entry name" value="GIP"/>
</dbReference>
<dbReference type="InterPro" id="IPR000532">
    <property type="entry name" value="Glucagon_GIP_secretin_VIP"/>
</dbReference>
<dbReference type="PANTHER" id="PTHR15211:SF0">
    <property type="entry name" value="GASTRIC INHIBITORY POLYPEPTIDE"/>
    <property type="match status" value="1"/>
</dbReference>
<dbReference type="PANTHER" id="PTHR15211">
    <property type="entry name" value="GLUCOSE-DEPENDENT INSULINOTROPIC POLYPEPTIDE"/>
    <property type="match status" value="1"/>
</dbReference>
<dbReference type="Pfam" id="PF00123">
    <property type="entry name" value="Hormone_2"/>
    <property type="match status" value="1"/>
</dbReference>
<dbReference type="SMART" id="SM00070">
    <property type="entry name" value="GLUCA"/>
    <property type="match status" value="1"/>
</dbReference>
<dbReference type="PROSITE" id="PS00260">
    <property type="entry name" value="GLUCAGON"/>
    <property type="match status" value="1"/>
</dbReference>
<keyword id="KW-0002">3D-structure</keyword>
<keyword id="KW-0165">Cleavage on pair of basic residues</keyword>
<keyword id="KW-0903">Direct protein sequencing</keyword>
<keyword id="KW-0372">Hormone</keyword>
<keyword id="KW-1267">Proteomics identification</keyword>
<keyword id="KW-1185">Reference proteome</keyword>
<keyword id="KW-0964">Secreted</keyword>
<keyword id="KW-0732">Signal</keyword>
<protein>
    <recommendedName>
        <fullName>Gastric inhibitory polypeptide</fullName>
        <shortName>GIP</shortName>
    </recommendedName>
    <alternativeName>
        <fullName>Glucose-dependent insulinotropic polypeptide</fullName>
    </alternativeName>
    <alternativeName>
        <fullName>Incretin hormone</fullName>
    </alternativeName>
</protein>
<proteinExistence type="evidence at protein level"/>
<sequence>MVATKTFALLLLSLFLAVGLGEKKEGHFSALPSLPVGSHAKVSSPQPRGPRYAEGTFISDYSIAMDKIHQQDFVNWLLAQKGKKNDWKHNITQREARALELASQANRKEEEAVEPQSSPAKNPSDEDLLRDLLIQELLACLLDQTNLCRLRSR</sequence>
<reference key="1">
    <citation type="journal article" date="1987" name="Proc. Natl. Acad. Sci. U.S.A.">
        <title>Sequence of an intestinal cDNA encoding human gastric inhibitory polypeptide precursor.</title>
        <authorList>
            <person name="Takeda J."/>
            <person name="Seino Y."/>
            <person name="Tanaka K."/>
            <person name="Fukumoto H."/>
            <person name="Kayano T."/>
            <person name="Takahashi H."/>
            <person name="Mitani T."/>
            <person name="Kurono M."/>
            <person name="Suzuki T."/>
            <person name="Tobe T."/>
            <person name="Imura H."/>
        </authorList>
    </citation>
    <scope>NUCLEOTIDE SEQUENCE [MRNA]</scope>
</reference>
<reference key="2">
    <citation type="journal article" date="1989" name="Mol. Endocrinol.">
        <title>Gastric inhibitory polypeptide: structure and chromosomal localization of the human gene.</title>
        <authorList>
            <person name="Inagaki N."/>
            <person name="Seino Y."/>
            <person name="Takeda J."/>
            <person name="Yano H."/>
            <person name="Yamada Y."/>
            <person name="Bell G.I."/>
            <person name="Eddy R.L. Jr."/>
            <person name="Fukushima Y."/>
            <person name="Byers M.G."/>
            <person name="Shows T.B."/>
            <person name="Imura H."/>
        </authorList>
    </citation>
    <scope>NUCLEOTIDE SEQUENCE [GENOMIC DNA]</scope>
</reference>
<reference key="3">
    <citation type="journal article" date="2004" name="Genome Res.">
        <title>The status, quality, and expansion of the NIH full-length cDNA project: the Mammalian Gene Collection (MGC).</title>
        <authorList>
            <consortium name="The MGC Project Team"/>
        </authorList>
    </citation>
    <scope>NUCLEOTIDE SEQUENCE [LARGE SCALE MRNA]</scope>
    <scope>VARIANT GLY-103</scope>
</reference>
<reference key="4">
    <citation type="journal article" date="1984" name="FEBS Lett.">
        <title>The isolation and sequencing of human gastric inhibitory peptide (GIP).</title>
        <authorList>
            <person name="Moody A.J."/>
            <person name="Thim L."/>
            <person name="Valverde I."/>
        </authorList>
    </citation>
    <scope>PROTEIN SEQUENCE OF 52-93</scope>
</reference>
<reference key="5">
    <citation type="journal article" date="2004" name="Biochem. Biophys. Res. Commun.">
        <title>NMR structure of the glucose-dependent insulinotropic polypeptide fragment, GIP(1-30)amide.</title>
        <authorList>
            <person name="Alana I."/>
            <person name="Hewage C.M."/>
            <person name="Malthouse J.P."/>
            <person name="Parker J.C."/>
            <person name="Gault V.A."/>
            <person name="O'Harte F.P."/>
        </authorList>
    </citation>
    <scope>STRUCTURE BY NMR OF 52-81</scope>
</reference>